<name>TRUB_NITMU</name>
<keyword id="KW-0413">Isomerase</keyword>
<keyword id="KW-1185">Reference proteome</keyword>
<keyword id="KW-0819">tRNA processing</keyword>
<comment type="function">
    <text evidence="1">Responsible for synthesis of pseudouridine from uracil-55 in the psi GC loop of transfer RNAs.</text>
</comment>
<comment type="catalytic activity">
    <reaction evidence="1">
        <text>uridine(55) in tRNA = pseudouridine(55) in tRNA</text>
        <dbReference type="Rhea" id="RHEA:42532"/>
        <dbReference type="Rhea" id="RHEA-COMP:10101"/>
        <dbReference type="Rhea" id="RHEA-COMP:10102"/>
        <dbReference type="ChEBI" id="CHEBI:65314"/>
        <dbReference type="ChEBI" id="CHEBI:65315"/>
        <dbReference type="EC" id="5.4.99.25"/>
    </reaction>
</comment>
<comment type="similarity">
    <text evidence="1">Belongs to the pseudouridine synthase TruB family. Type 1 subfamily.</text>
</comment>
<sequence>MSPGSKRHISGVLLLDKASGLSSNQALQTAKRIFSAHKAGHTGTLDPMATGLLPICFGEATKFSSALLGADKTYEAVLRLGYMSTTGDAEGEISIAAGMESQYVDLTREKIEAVRKSFIGVITQVPPMYSAIKHRGKPMYTFARAGVEIERQPRAITIHDLSIEAYQGNEMRIRVTCGSGTYIRTLAEDLGHALGCGGAYLTALRRSALGGFDLPQAYTLTGLEAMPPSQRDSCLLPADSLLRSLPPVVVDSAAALSLLQGRAIPGTHPAGESLLPGRQVRLYDKAQRFLGLGEISTEGYISPKRLIRFEQSL</sequence>
<organism>
    <name type="scientific">Nitrosospira multiformis (strain ATCC 25196 / NCIMB 11849 / C 71)</name>
    <dbReference type="NCBI Taxonomy" id="323848"/>
    <lineage>
        <taxon>Bacteria</taxon>
        <taxon>Pseudomonadati</taxon>
        <taxon>Pseudomonadota</taxon>
        <taxon>Betaproteobacteria</taxon>
        <taxon>Nitrosomonadales</taxon>
        <taxon>Nitrosomonadaceae</taxon>
        <taxon>Nitrosospira</taxon>
    </lineage>
</organism>
<gene>
    <name evidence="1" type="primary">truB</name>
    <name type="ordered locus">Nmul_A1862</name>
</gene>
<dbReference type="EC" id="5.4.99.25" evidence="1"/>
<dbReference type="EMBL" id="CP000103">
    <property type="protein sequence ID" value="ABB75157.1"/>
    <property type="molecule type" value="Genomic_DNA"/>
</dbReference>
<dbReference type="RefSeq" id="WP_011381177.1">
    <property type="nucleotide sequence ID" value="NC_007614.1"/>
</dbReference>
<dbReference type="SMR" id="Q2Y7W4"/>
<dbReference type="STRING" id="323848.Nmul_A1862"/>
<dbReference type="KEGG" id="nmu:Nmul_A1862"/>
<dbReference type="eggNOG" id="COG0130">
    <property type="taxonomic scope" value="Bacteria"/>
</dbReference>
<dbReference type="HOGENOM" id="CLU_032087_0_3_4"/>
<dbReference type="OrthoDB" id="9802309at2"/>
<dbReference type="Proteomes" id="UP000002718">
    <property type="component" value="Chromosome"/>
</dbReference>
<dbReference type="GO" id="GO:0003723">
    <property type="term" value="F:RNA binding"/>
    <property type="evidence" value="ECO:0007669"/>
    <property type="project" value="InterPro"/>
</dbReference>
<dbReference type="GO" id="GO:0160148">
    <property type="term" value="F:tRNA pseudouridine(55) synthase activity"/>
    <property type="evidence" value="ECO:0007669"/>
    <property type="project" value="UniProtKB-EC"/>
</dbReference>
<dbReference type="GO" id="GO:1990481">
    <property type="term" value="P:mRNA pseudouridine synthesis"/>
    <property type="evidence" value="ECO:0007669"/>
    <property type="project" value="TreeGrafter"/>
</dbReference>
<dbReference type="GO" id="GO:0031119">
    <property type="term" value="P:tRNA pseudouridine synthesis"/>
    <property type="evidence" value="ECO:0007669"/>
    <property type="project" value="UniProtKB-UniRule"/>
</dbReference>
<dbReference type="CDD" id="cd02573">
    <property type="entry name" value="PseudoU_synth_EcTruB"/>
    <property type="match status" value="1"/>
</dbReference>
<dbReference type="CDD" id="cd21152">
    <property type="entry name" value="PUA_TruB_bacterial"/>
    <property type="match status" value="1"/>
</dbReference>
<dbReference type="Gene3D" id="3.30.2350.10">
    <property type="entry name" value="Pseudouridine synthase"/>
    <property type="match status" value="1"/>
</dbReference>
<dbReference type="Gene3D" id="2.30.130.10">
    <property type="entry name" value="PUA domain"/>
    <property type="match status" value="1"/>
</dbReference>
<dbReference type="HAMAP" id="MF_01080">
    <property type="entry name" value="TruB_bact"/>
    <property type="match status" value="1"/>
</dbReference>
<dbReference type="InterPro" id="IPR020103">
    <property type="entry name" value="PsdUridine_synth_cat_dom_sf"/>
</dbReference>
<dbReference type="InterPro" id="IPR002501">
    <property type="entry name" value="PsdUridine_synth_N"/>
</dbReference>
<dbReference type="InterPro" id="IPR015947">
    <property type="entry name" value="PUA-like_sf"/>
</dbReference>
<dbReference type="InterPro" id="IPR036974">
    <property type="entry name" value="PUA_sf"/>
</dbReference>
<dbReference type="InterPro" id="IPR014780">
    <property type="entry name" value="tRNA_psdUridine_synth_TruB"/>
</dbReference>
<dbReference type="InterPro" id="IPR015240">
    <property type="entry name" value="tRNA_sdUridine_synth_fam1_C"/>
</dbReference>
<dbReference type="InterPro" id="IPR032819">
    <property type="entry name" value="TruB_C"/>
</dbReference>
<dbReference type="NCBIfam" id="TIGR00431">
    <property type="entry name" value="TruB"/>
    <property type="match status" value="1"/>
</dbReference>
<dbReference type="PANTHER" id="PTHR13767:SF2">
    <property type="entry name" value="PSEUDOURIDYLATE SYNTHASE TRUB1"/>
    <property type="match status" value="1"/>
</dbReference>
<dbReference type="PANTHER" id="PTHR13767">
    <property type="entry name" value="TRNA-PSEUDOURIDINE SYNTHASE"/>
    <property type="match status" value="1"/>
</dbReference>
<dbReference type="Pfam" id="PF09157">
    <property type="entry name" value="TruB-C_2"/>
    <property type="match status" value="1"/>
</dbReference>
<dbReference type="Pfam" id="PF16198">
    <property type="entry name" value="TruB_C_2"/>
    <property type="match status" value="1"/>
</dbReference>
<dbReference type="Pfam" id="PF01509">
    <property type="entry name" value="TruB_N"/>
    <property type="match status" value="1"/>
</dbReference>
<dbReference type="SUPFAM" id="SSF55120">
    <property type="entry name" value="Pseudouridine synthase"/>
    <property type="match status" value="1"/>
</dbReference>
<dbReference type="SUPFAM" id="SSF88697">
    <property type="entry name" value="PUA domain-like"/>
    <property type="match status" value="1"/>
</dbReference>
<feature type="chain" id="PRO_0000229365" description="tRNA pseudouridine synthase B">
    <location>
        <begin position="1"/>
        <end position="313"/>
    </location>
</feature>
<feature type="active site" description="Nucleophile" evidence="1">
    <location>
        <position position="46"/>
    </location>
</feature>
<reference key="1">
    <citation type="submission" date="2005-08" db="EMBL/GenBank/DDBJ databases">
        <title>Complete sequence of chromosome 1 of Nitrosospira multiformis ATCC 25196.</title>
        <authorList>
            <person name="Copeland A."/>
            <person name="Lucas S."/>
            <person name="Lapidus A."/>
            <person name="Barry K."/>
            <person name="Detter J.C."/>
            <person name="Glavina T."/>
            <person name="Hammon N."/>
            <person name="Israni S."/>
            <person name="Pitluck S."/>
            <person name="Chain P."/>
            <person name="Malfatti S."/>
            <person name="Shin M."/>
            <person name="Vergez L."/>
            <person name="Schmutz J."/>
            <person name="Larimer F."/>
            <person name="Land M."/>
            <person name="Hauser L."/>
            <person name="Kyrpides N."/>
            <person name="Lykidis A."/>
            <person name="Richardson P."/>
        </authorList>
    </citation>
    <scope>NUCLEOTIDE SEQUENCE [LARGE SCALE GENOMIC DNA]</scope>
    <source>
        <strain>ATCC 25196 / NCIMB 11849 / C 71</strain>
    </source>
</reference>
<evidence type="ECO:0000255" key="1">
    <source>
        <dbReference type="HAMAP-Rule" id="MF_01080"/>
    </source>
</evidence>
<accession>Q2Y7W4</accession>
<protein>
    <recommendedName>
        <fullName evidence="1">tRNA pseudouridine synthase B</fullName>
        <ecNumber evidence="1">5.4.99.25</ecNumber>
    </recommendedName>
    <alternativeName>
        <fullName evidence="1">tRNA pseudouridine(55) synthase</fullName>
        <shortName evidence="1">Psi55 synthase</shortName>
    </alternativeName>
    <alternativeName>
        <fullName evidence="1">tRNA pseudouridylate synthase</fullName>
    </alternativeName>
    <alternativeName>
        <fullName evidence="1">tRNA-uridine isomerase</fullName>
    </alternativeName>
</protein>
<proteinExistence type="inferred from homology"/>